<feature type="chain" id="PRO_1000005858" description="Probable GTP-binding protein EngB">
    <location>
        <begin position="1"/>
        <end position="219"/>
    </location>
</feature>
<feature type="domain" description="EngB-type G" evidence="1">
    <location>
        <begin position="31"/>
        <end position="205"/>
    </location>
</feature>
<feature type="binding site" evidence="1">
    <location>
        <begin position="39"/>
        <end position="46"/>
    </location>
    <ligand>
        <name>GTP</name>
        <dbReference type="ChEBI" id="CHEBI:37565"/>
    </ligand>
</feature>
<feature type="binding site" evidence="1">
    <location>
        <position position="46"/>
    </location>
    <ligand>
        <name>Mg(2+)</name>
        <dbReference type="ChEBI" id="CHEBI:18420"/>
    </ligand>
</feature>
<feature type="binding site" evidence="1">
    <location>
        <begin position="66"/>
        <end position="70"/>
    </location>
    <ligand>
        <name>GTP</name>
        <dbReference type="ChEBI" id="CHEBI:37565"/>
    </ligand>
</feature>
<feature type="binding site" evidence="1">
    <location>
        <position position="68"/>
    </location>
    <ligand>
        <name>Mg(2+)</name>
        <dbReference type="ChEBI" id="CHEBI:18420"/>
    </ligand>
</feature>
<feature type="binding site" evidence="1">
    <location>
        <begin position="84"/>
        <end position="87"/>
    </location>
    <ligand>
        <name>GTP</name>
        <dbReference type="ChEBI" id="CHEBI:37565"/>
    </ligand>
</feature>
<feature type="binding site" evidence="1">
    <location>
        <begin position="151"/>
        <end position="154"/>
    </location>
    <ligand>
        <name>GTP</name>
        <dbReference type="ChEBI" id="CHEBI:37565"/>
    </ligand>
</feature>
<feature type="binding site" evidence="1">
    <location>
        <begin position="184"/>
        <end position="186"/>
    </location>
    <ligand>
        <name>GTP</name>
        <dbReference type="ChEBI" id="CHEBI:37565"/>
    </ligand>
</feature>
<reference key="1">
    <citation type="submission" date="2006-12" db="EMBL/GenBank/DDBJ databases">
        <title>Complete sequence of Shewanella sp. W3-18-1.</title>
        <authorList>
            <consortium name="US DOE Joint Genome Institute"/>
            <person name="Copeland A."/>
            <person name="Lucas S."/>
            <person name="Lapidus A."/>
            <person name="Barry K."/>
            <person name="Detter J.C."/>
            <person name="Glavina del Rio T."/>
            <person name="Hammon N."/>
            <person name="Israni S."/>
            <person name="Dalin E."/>
            <person name="Tice H."/>
            <person name="Pitluck S."/>
            <person name="Chain P."/>
            <person name="Malfatti S."/>
            <person name="Shin M."/>
            <person name="Vergez L."/>
            <person name="Schmutz J."/>
            <person name="Larimer F."/>
            <person name="Land M."/>
            <person name="Hauser L."/>
            <person name="Kyrpides N."/>
            <person name="Lykidis A."/>
            <person name="Tiedje J."/>
            <person name="Richardson P."/>
        </authorList>
    </citation>
    <scope>NUCLEOTIDE SEQUENCE [LARGE SCALE GENOMIC DNA]</scope>
    <source>
        <strain>W3-18-1</strain>
    </source>
</reference>
<organism>
    <name type="scientific">Shewanella sp. (strain W3-18-1)</name>
    <dbReference type="NCBI Taxonomy" id="351745"/>
    <lineage>
        <taxon>Bacteria</taxon>
        <taxon>Pseudomonadati</taxon>
        <taxon>Pseudomonadota</taxon>
        <taxon>Gammaproteobacteria</taxon>
        <taxon>Alteromonadales</taxon>
        <taxon>Shewanellaceae</taxon>
        <taxon>Shewanella</taxon>
    </lineage>
</organism>
<evidence type="ECO:0000255" key="1">
    <source>
        <dbReference type="HAMAP-Rule" id="MF_00321"/>
    </source>
</evidence>
<name>ENGB_SHESW</name>
<dbReference type="EMBL" id="CP000503">
    <property type="protein sequence ID" value="ABM22897.1"/>
    <property type="molecule type" value="Genomic_DNA"/>
</dbReference>
<dbReference type="SMR" id="A1RE02"/>
<dbReference type="KEGG" id="shw:Sputw3181_0044"/>
<dbReference type="HOGENOM" id="CLU_033732_1_2_6"/>
<dbReference type="Proteomes" id="UP000002597">
    <property type="component" value="Chromosome"/>
</dbReference>
<dbReference type="GO" id="GO:0005829">
    <property type="term" value="C:cytosol"/>
    <property type="evidence" value="ECO:0007669"/>
    <property type="project" value="TreeGrafter"/>
</dbReference>
<dbReference type="GO" id="GO:0005525">
    <property type="term" value="F:GTP binding"/>
    <property type="evidence" value="ECO:0007669"/>
    <property type="project" value="UniProtKB-UniRule"/>
</dbReference>
<dbReference type="GO" id="GO:0046872">
    <property type="term" value="F:metal ion binding"/>
    <property type="evidence" value="ECO:0007669"/>
    <property type="project" value="UniProtKB-KW"/>
</dbReference>
<dbReference type="GO" id="GO:0000917">
    <property type="term" value="P:division septum assembly"/>
    <property type="evidence" value="ECO:0007669"/>
    <property type="project" value="UniProtKB-KW"/>
</dbReference>
<dbReference type="CDD" id="cd01876">
    <property type="entry name" value="YihA_EngB"/>
    <property type="match status" value="1"/>
</dbReference>
<dbReference type="FunFam" id="3.40.50.300:FF:000098">
    <property type="entry name" value="Probable GTP-binding protein EngB"/>
    <property type="match status" value="1"/>
</dbReference>
<dbReference type="Gene3D" id="3.40.50.300">
    <property type="entry name" value="P-loop containing nucleotide triphosphate hydrolases"/>
    <property type="match status" value="1"/>
</dbReference>
<dbReference type="HAMAP" id="MF_00321">
    <property type="entry name" value="GTPase_EngB"/>
    <property type="match status" value="1"/>
</dbReference>
<dbReference type="InterPro" id="IPR030393">
    <property type="entry name" value="G_ENGB_dom"/>
</dbReference>
<dbReference type="InterPro" id="IPR006073">
    <property type="entry name" value="GTP-bd"/>
</dbReference>
<dbReference type="InterPro" id="IPR019987">
    <property type="entry name" value="GTP-bd_ribosome_bio_YsxC"/>
</dbReference>
<dbReference type="InterPro" id="IPR027417">
    <property type="entry name" value="P-loop_NTPase"/>
</dbReference>
<dbReference type="NCBIfam" id="TIGR03598">
    <property type="entry name" value="GTPase_YsxC"/>
    <property type="match status" value="1"/>
</dbReference>
<dbReference type="PANTHER" id="PTHR11649:SF13">
    <property type="entry name" value="ENGB-TYPE G DOMAIN-CONTAINING PROTEIN"/>
    <property type="match status" value="1"/>
</dbReference>
<dbReference type="PANTHER" id="PTHR11649">
    <property type="entry name" value="MSS1/TRME-RELATED GTP-BINDING PROTEIN"/>
    <property type="match status" value="1"/>
</dbReference>
<dbReference type="Pfam" id="PF01926">
    <property type="entry name" value="MMR_HSR1"/>
    <property type="match status" value="1"/>
</dbReference>
<dbReference type="SUPFAM" id="SSF52540">
    <property type="entry name" value="P-loop containing nucleoside triphosphate hydrolases"/>
    <property type="match status" value="1"/>
</dbReference>
<dbReference type="PROSITE" id="PS51706">
    <property type="entry name" value="G_ENGB"/>
    <property type="match status" value="1"/>
</dbReference>
<comment type="function">
    <text evidence="1">Necessary for normal cell division and for the maintenance of normal septation.</text>
</comment>
<comment type="cofactor">
    <cofactor evidence="1">
        <name>Mg(2+)</name>
        <dbReference type="ChEBI" id="CHEBI:18420"/>
    </cofactor>
</comment>
<comment type="similarity">
    <text evidence="1">Belongs to the TRAFAC class TrmE-Era-EngA-EngB-Septin-like GTPase superfamily. EngB GTPase family.</text>
</comment>
<accession>A1RE02</accession>
<sequence length="219" mass="24385">MTESHIDFRRAKFLISAPDIAHLDQYLPGDVGVEIAFAGRSNAGKSSALNALTEQKSLARTSKTPGRTQLINVFELDSQRRLVDLPGYGFAQVPLAMKNKWQQALGEYLQKRACLSGVVVLMDIRHPLKDLDMQMIQWAVASEIPVLALLTKSDKLAQSAKMKTVNEVRKALADFGDWVLVEPFSALKGTGKPKVLSILNEWCHPQWLRDELDTAEQSN</sequence>
<keyword id="KW-0131">Cell cycle</keyword>
<keyword id="KW-0132">Cell division</keyword>
<keyword id="KW-0342">GTP-binding</keyword>
<keyword id="KW-0460">Magnesium</keyword>
<keyword id="KW-0479">Metal-binding</keyword>
<keyword id="KW-0547">Nucleotide-binding</keyword>
<keyword id="KW-0717">Septation</keyword>
<protein>
    <recommendedName>
        <fullName evidence="1">Probable GTP-binding protein EngB</fullName>
    </recommendedName>
</protein>
<proteinExistence type="inferred from homology"/>
<gene>
    <name evidence="1" type="primary">engB</name>
    <name type="ordered locus">Sputw3181_0044</name>
</gene>